<keyword id="KW-0012">Acyltransferase</keyword>
<keyword id="KW-0441">Lipid A biosynthesis</keyword>
<keyword id="KW-0444">Lipid biosynthesis</keyword>
<keyword id="KW-0443">Lipid metabolism</keyword>
<keyword id="KW-1185">Reference proteome</keyword>
<keyword id="KW-0677">Repeat</keyword>
<keyword id="KW-0808">Transferase</keyword>
<evidence type="ECO:0000255" key="1">
    <source>
        <dbReference type="HAMAP-Rule" id="MF_00523"/>
    </source>
</evidence>
<sequence length="340" mass="37059">MLEIKLSDVSKIISAKLYGDKNFIIKGISSIEDSKPGYISFIYKNKFRKYLPSCKASAIILAKDNLPFCKQFALVVKDPYIAYVKLVKFMYVKKIPKYRIRSTAIVSKKAILGKNIYIGHNTVIESKVKLENNIIIGSGCFIGENTIIGSNTHLWDNTTIHHGTIIGNNCSIQSGSVIGSDGFGYANKNGSWIKIPHLGKVVIGNNVEIGSSTTIDRGSIDNTVIGNGVIIDNQCQIAHNVIIGENTAIAGGVVMAGSLIIGSNCIIGGASVINGHIIICDRVKITGMSMVMRSIKTPGIYSSGVPAQLNKKWKKNTALIMNINKIKKQIKEILKKYKKK</sequence>
<protein>
    <recommendedName>
        <fullName evidence="1">UDP-3-O-(3-hydroxymyristoyl)glucosamine N-acyltransferase</fullName>
        <shortName evidence="1">UDP-3-O-(3-OHC14)-GlcN N-acyltransferase</shortName>
        <ecNumber evidence="1">2.3.1.191</ecNumber>
    </recommendedName>
    <alternativeName>
        <fullName evidence="1">UDP-3-O-(3-hydroxytetradecanoyl)glucosamine N-acyltransferase</fullName>
    </alternativeName>
</protein>
<accession>Q8D2H2</accession>
<name>LPXD_WIGBR</name>
<gene>
    <name evidence="1" type="primary">lpxD</name>
    <name type="ordered locus">WIGBR3820</name>
</gene>
<feature type="chain" id="PRO_0000059711" description="UDP-3-O-(3-hydroxymyristoyl)glucosamine N-acyltransferase">
    <location>
        <begin position="1"/>
        <end position="340"/>
    </location>
</feature>
<feature type="active site" description="Proton acceptor" evidence="1">
    <location>
        <position position="239"/>
    </location>
</feature>
<organism>
    <name type="scientific">Wigglesworthia glossinidia brevipalpis</name>
    <dbReference type="NCBI Taxonomy" id="36870"/>
    <lineage>
        <taxon>Bacteria</taxon>
        <taxon>Pseudomonadati</taxon>
        <taxon>Pseudomonadota</taxon>
        <taxon>Gammaproteobacteria</taxon>
        <taxon>Enterobacterales</taxon>
        <taxon>Erwiniaceae</taxon>
        <taxon>Wigglesworthia</taxon>
    </lineage>
</organism>
<comment type="function">
    <text evidence="1">Catalyzes the N-acylation of UDP-3-O-(hydroxytetradecanoyl)glucosamine using 3-hydroxytetradecanoyl-ACP as the acyl donor. Is involved in the biosynthesis of lipid A, a phosphorylated glycolipid that anchors the lipopolysaccharide to the outer membrane of the cell.</text>
</comment>
<comment type="catalytic activity">
    <reaction evidence="1">
        <text>a UDP-3-O-[(3R)-3-hydroxyacyl]-alpha-D-glucosamine + a (3R)-hydroxyacyl-[ACP] = a UDP-2-N,3-O-bis[(3R)-3-hydroxyacyl]-alpha-D-glucosamine + holo-[ACP] + H(+)</text>
        <dbReference type="Rhea" id="RHEA:53836"/>
        <dbReference type="Rhea" id="RHEA-COMP:9685"/>
        <dbReference type="Rhea" id="RHEA-COMP:9945"/>
        <dbReference type="ChEBI" id="CHEBI:15378"/>
        <dbReference type="ChEBI" id="CHEBI:64479"/>
        <dbReference type="ChEBI" id="CHEBI:78827"/>
        <dbReference type="ChEBI" id="CHEBI:137740"/>
        <dbReference type="ChEBI" id="CHEBI:137748"/>
        <dbReference type="EC" id="2.3.1.191"/>
    </reaction>
</comment>
<comment type="catalytic activity">
    <reaction evidence="1">
        <text>UDP-3-O-[(3R)-3-hydroxytetradecanoyl]-alpha-D-glucosamine + (3R)-hydroxytetradecanoyl-[ACP] = UDP-2-N,3-O-bis[(3R)-3-hydroxytetradecanoyl]-alpha-D-glucosamine + holo-[ACP] + H(+)</text>
        <dbReference type="Rhea" id="RHEA:17817"/>
        <dbReference type="Rhea" id="RHEA-COMP:9646"/>
        <dbReference type="Rhea" id="RHEA-COMP:9685"/>
        <dbReference type="ChEBI" id="CHEBI:15378"/>
        <dbReference type="ChEBI" id="CHEBI:64479"/>
        <dbReference type="ChEBI" id="CHEBI:71573"/>
        <dbReference type="ChEBI" id="CHEBI:78474"/>
        <dbReference type="ChEBI" id="CHEBI:78847"/>
    </reaction>
</comment>
<comment type="pathway">
    <text evidence="1">Glycolipid biosynthesis; lipid IV(A) biosynthesis; lipid IV(A) from (3R)-3-hydroxytetradecanoyl-[acyl-carrier-protein] and UDP-N-acetyl-alpha-D-glucosamine: step 3/6.</text>
</comment>
<comment type="subunit">
    <text evidence="1">Homotrimer.</text>
</comment>
<comment type="similarity">
    <text evidence="1">Belongs to the transferase hexapeptide repeat family. LpxD subfamily.</text>
</comment>
<proteinExistence type="inferred from homology"/>
<reference key="1">
    <citation type="journal article" date="2002" name="Nat. Genet.">
        <title>Genome sequence of the endocellular obligate symbiont of tsetse flies, Wigglesworthia glossinidia.</title>
        <authorList>
            <person name="Akman L."/>
            <person name="Yamashita A."/>
            <person name="Watanabe H."/>
            <person name="Oshima K."/>
            <person name="Shiba T."/>
            <person name="Hattori M."/>
            <person name="Aksoy S."/>
        </authorList>
    </citation>
    <scope>NUCLEOTIDE SEQUENCE [LARGE SCALE GENOMIC DNA]</scope>
</reference>
<dbReference type="EC" id="2.3.1.191" evidence="1"/>
<dbReference type="EMBL" id="BA000021">
    <property type="protein sequence ID" value="BAC24528.1"/>
    <property type="molecule type" value="Genomic_DNA"/>
</dbReference>
<dbReference type="SMR" id="Q8D2H2"/>
<dbReference type="STRING" id="36870.gene:10368882"/>
<dbReference type="KEGG" id="wbr:lpxD"/>
<dbReference type="eggNOG" id="COG1044">
    <property type="taxonomic scope" value="Bacteria"/>
</dbReference>
<dbReference type="HOGENOM" id="CLU_049865_0_1_6"/>
<dbReference type="OrthoDB" id="9784739at2"/>
<dbReference type="UniPathway" id="UPA00359">
    <property type="reaction ID" value="UER00479"/>
</dbReference>
<dbReference type="Proteomes" id="UP000000562">
    <property type="component" value="Chromosome"/>
</dbReference>
<dbReference type="GO" id="GO:0016020">
    <property type="term" value="C:membrane"/>
    <property type="evidence" value="ECO:0007669"/>
    <property type="project" value="GOC"/>
</dbReference>
<dbReference type="GO" id="GO:0016410">
    <property type="term" value="F:N-acyltransferase activity"/>
    <property type="evidence" value="ECO:0007669"/>
    <property type="project" value="InterPro"/>
</dbReference>
<dbReference type="GO" id="GO:0103118">
    <property type="term" value="F:UDP-3-O-(R-3-hydroxymyristoyl)-glucosamine N-acyltransferase activity"/>
    <property type="evidence" value="ECO:0007669"/>
    <property type="project" value="UniProtKB-EC"/>
</dbReference>
<dbReference type="GO" id="GO:0009245">
    <property type="term" value="P:lipid A biosynthetic process"/>
    <property type="evidence" value="ECO:0007669"/>
    <property type="project" value="UniProtKB-UniRule"/>
</dbReference>
<dbReference type="CDD" id="cd03352">
    <property type="entry name" value="LbH_LpxD"/>
    <property type="match status" value="1"/>
</dbReference>
<dbReference type="Gene3D" id="2.160.10.10">
    <property type="entry name" value="Hexapeptide repeat proteins"/>
    <property type="match status" value="1"/>
</dbReference>
<dbReference type="Gene3D" id="3.40.1390.10">
    <property type="entry name" value="MurE/MurF, N-terminal domain"/>
    <property type="match status" value="1"/>
</dbReference>
<dbReference type="HAMAP" id="MF_00523">
    <property type="entry name" value="LpxD"/>
    <property type="match status" value="1"/>
</dbReference>
<dbReference type="InterPro" id="IPR001451">
    <property type="entry name" value="Hexapep"/>
</dbReference>
<dbReference type="InterPro" id="IPR018357">
    <property type="entry name" value="Hexapep_transf_CS"/>
</dbReference>
<dbReference type="InterPro" id="IPR007691">
    <property type="entry name" value="LpxD"/>
</dbReference>
<dbReference type="InterPro" id="IPR011004">
    <property type="entry name" value="Trimer_LpxA-like_sf"/>
</dbReference>
<dbReference type="InterPro" id="IPR020573">
    <property type="entry name" value="UDP_GlcNAc_AcTrfase_non-rep"/>
</dbReference>
<dbReference type="NCBIfam" id="TIGR01853">
    <property type="entry name" value="lipid_A_lpxD"/>
    <property type="match status" value="1"/>
</dbReference>
<dbReference type="NCBIfam" id="NF002060">
    <property type="entry name" value="PRK00892.1"/>
    <property type="match status" value="1"/>
</dbReference>
<dbReference type="PANTHER" id="PTHR43378">
    <property type="entry name" value="UDP-3-O-ACYLGLUCOSAMINE N-ACYLTRANSFERASE"/>
    <property type="match status" value="1"/>
</dbReference>
<dbReference type="PANTHER" id="PTHR43378:SF2">
    <property type="entry name" value="UDP-3-O-ACYLGLUCOSAMINE N-ACYLTRANSFERASE 1, MITOCHONDRIAL-RELATED"/>
    <property type="match status" value="1"/>
</dbReference>
<dbReference type="Pfam" id="PF00132">
    <property type="entry name" value="Hexapep"/>
    <property type="match status" value="2"/>
</dbReference>
<dbReference type="Pfam" id="PF04613">
    <property type="entry name" value="LpxD"/>
    <property type="match status" value="1"/>
</dbReference>
<dbReference type="SUPFAM" id="SSF51161">
    <property type="entry name" value="Trimeric LpxA-like enzymes"/>
    <property type="match status" value="1"/>
</dbReference>
<dbReference type="PROSITE" id="PS00101">
    <property type="entry name" value="HEXAPEP_TRANSFERASES"/>
    <property type="match status" value="1"/>
</dbReference>